<protein>
    <recommendedName>
        <fullName>Uncharacterized 3.7 kDa protein in rusA 5'region</fullName>
    </recommendedName>
    <alternativeName>
        <fullName>ORF33</fullName>
    </alternativeName>
</protein>
<proteinExistence type="predicted"/>
<organism>
    <name type="scientific">Enterobacteria phage 82</name>
    <name type="common">Bacteriophage 82</name>
    <dbReference type="NCBI Taxonomy" id="10705"/>
    <lineage>
        <taxon>Viruses</taxon>
        <taxon>Duplodnaviria</taxon>
        <taxon>Heunggongvirae</taxon>
        <taxon>Uroviricota</taxon>
        <taxon>Caudoviricetes</taxon>
        <taxon>Lambdavirus</taxon>
    </lineage>
</organism>
<accession>Q37869</accession>
<feature type="chain" id="PRO_0000168660" description="Uncharacterized 3.7 kDa protein in rusA 5'region">
    <location>
        <begin position="1"/>
        <end position="33"/>
    </location>
</feature>
<sequence length="33" mass="3673">MRTYNPNSLLPSQMQKCTCVFLHPAFDLCGGEA</sequence>
<dbReference type="EMBL" id="X92588">
    <property type="protein sequence ID" value="CAA63326.1"/>
    <property type="molecule type" value="Genomic_DNA"/>
</dbReference>
<dbReference type="PIR" id="S66579">
    <property type="entry name" value="S66579"/>
</dbReference>
<name>YLCH_BP82</name>
<organismHost>
    <name type="scientific">Escherichia coli</name>
    <dbReference type="NCBI Taxonomy" id="562"/>
</organismHost>
<reference key="1">
    <citation type="journal article" date="1996" name="J. Mol. Biol.">
        <title>Holliday junction resolvases encoded by homologous rusA genes in Escherichia coli K-12 and phage 82.</title>
        <authorList>
            <person name="Mahdi A.A."/>
            <person name="Sharples G.J."/>
            <person name="Mandal T.N."/>
            <person name="Lloyd R.G."/>
        </authorList>
    </citation>
    <scope>NUCLEOTIDE SEQUENCE [GENOMIC DNA]</scope>
</reference>
<comment type="similarity">
    <text evidence="1">To E.coli ylcH.</text>
</comment>
<evidence type="ECO:0000305" key="1"/>